<keyword id="KW-0963">Cytoplasm</keyword>
<keyword id="KW-0489">Methyltransferase</keyword>
<keyword id="KW-0698">rRNA processing</keyword>
<keyword id="KW-0949">S-adenosyl-L-methionine</keyword>
<keyword id="KW-0808">Transferase</keyword>
<dbReference type="EC" id="2.1.1.172" evidence="1"/>
<dbReference type="EMBL" id="AP009240">
    <property type="protein sequence ID" value="BAG80169.1"/>
    <property type="molecule type" value="Genomic_DNA"/>
</dbReference>
<dbReference type="RefSeq" id="WP_001272319.1">
    <property type="nucleotide sequence ID" value="NC_011415.1"/>
</dbReference>
<dbReference type="SMR" id="B6I2Q2"/>
<dbReference type="KEGG" id="ecy:ECSE_4645"/>
<dbReference type="HOGENOM" id="CLU_049581_0_1_6"/>
<dbReference type="Proteomes" id="UP000008199">
    <property type="component" value="Chromosome"/>
</dbReference>
<dbReference type="GO" id="GO:0005737">
    <property type="term" value="C:cytoplasm"/>
    <property type="evidence" value="ECO:0007669"/>
    <property type="project" value="UniProtKB-SubCell"/>
</dbReference>
<dbReference type="GO" id="GO:0052914">
    <property type="term" value="F:16S rRNA (guanine(1207)-N(2))-methyltransferase activity"/>
    <property type="evidence" value="ECO:0007669"/>
    <property type="project" value="UniProtKB-EC"/>
</dbReference>
<dbReference type="GO" id="GO:0003676">
    <property type="term" value="F:nucleic acid binding"/>
    <property type="evidence" value="ECO:0007669"/>
    <property type="project" value="InterPro"/>
</dbReference>
<dbReference type="CDD" id="cd02440">
    <property type="entry name" value="AdoMet_MTases"/>
    <property type="match status" value="1"/>
</dbReference>
<dbReference type="FunFam" id="3.40.50.150:FF:000058">
    <property type="entry name" value="Ribosomal RNA small subunit methyltransferase C"/>
    <property type="match status" value="1"/>
</dbReference>
<dbReference type="FunFam" id="3.40.50.150:FF:000063">
    <property type="entry name" value="Ribosomal RNA small subunit methyltransferase C"/>
    <property type="match status" value="1"/>
</dbReference>
<dbReference type="Gene3D" id="3.40.50.150">
    <property type="entry name" value="Vaccinia Virus protein VP39"/>
    <property type="match status" value="2"/>
</dbReference>
<dbReference type="HAMAP" id="MF_01862">
    <property type="entry name" value="16SrRNA_methyltr_C"/>
    <property type="match status" value="1"/>
</dbReference>
<dbReference type="InterPro" id="IPR002052">
    <property type="entry name" value="DNA_methylase_N6_adenine_CS"/>
</dbReference>
<dbReference type="InterPro" id="IPR013675">
    <property type="entry name" value="Mtase_sm_N"/>
</dbReference>
<dbReference type="InterPro" id="IPR023543">
    <property type="entry name" value="rRNA_ssu_MeTfrase_C"/>
</dbReference>
<dbReference type="InterPro" id="IPR046977">
    <property type="entry name" value="RsmC/RlmG"/>
</dbReference>
<dbReference type="InterPro" id="IPR029063">
    <property type="entry name" value="SAM-dependent_MTases_sf"/>
</dbReference>
<dbReference type="InterPro" id="IPR007848">
    <property type="entry name" value="Small_mtfrase_dom"/>
</dbReference>
<dbReference type="NCBIfam" id="NF007023">
    <property type="entry name" value="PRK09489.1"/>
    <property type="match status" value="1"/>
</dbReference>
<dbReference type="PANTHER" id="PTHR47816">
    <property type="entry name" value="RIBOSOMAL RNA SMALL SUBUNIT METHYLTRANSFERASE C"/>
    <property type="match status" value="1"/>
</dbReference>
<dbReference type="PANTHER" id="PTHR47816:SF4">
    <property type="entry name" value="RIBOSOMAL RNA SMALL SUBUNIT METHYLTRANSFERASE C"/>
    <property type="match status" value="1"/>
</dbReference>
<dbReference type="Pfam" id="PF05175">
    <property type="entry name" value="MTS"/>
    <property type="match status" value="1"/>
</dbReference>
<dbReference type="Pfam" id="PF08468">
    <property type="entry name" value="MTS_N"/>
    <property type="match status" value="1"/>
</dbReference>
<dbReference type="SUPFAM" id="SSF53335">
    <property type="entry name" value="S-adenosyl-L-methionine-dependent methyltransferases"/>
    <property type="match status" value="1"/>
</dbReference>
<name>RSMC_ECOSE</name>
<evidence type="ECO:0000255" key="1">
    <source>
        <dbReference type="HAMAP-Rule" id="MF_01862"/>
    </source>
</evidence>
<organism>
    <name type="scientific">Escherichia coli (strain SE11)</name>
    <dbReference type="NCBI Taxonomy" id="409438"/>
    <lineage>
        <taxon>Bacteria</taxon>
        <taxon>Pseudomonadati</taxon>
        <taxon>Pseudomonadota</taxon>
        <taxon>Gammaproteobacteria</taxon>
        <taxon>Enterobacterales</taxon>
        <taxon>Enterobacteriaceae</taxon>
        <taxon>Escherichia</taxon>
    </lineage>
</organism>
<feature type="chain" id="PRO_0000369701" description="Ribosomal RNA small subunit methyltransferase C">
    <location>
        <begin position="1"/>
        <end position="343"/>
    </location>
</feature>
<comment type="function">
    <text evidence="1">Specifically methylates the guanine in position 1207 of 16S rRNA in the 30S particle.</text>
</comment>
<comment type="catalytic activity">
    <reaction evidence="1">
        <text>guanosine(1207) in 16S rRNA + S-adenosyl-L-methionine = N(2)-methylguanosine(1207) in 16S rRNA + S-adenosyl-L-homocysteine + H(+)</text>
        <dbReference type="Rhea" id="RHEA:42736"/>
        <dbReference type="Rhea" id="RHEA-COMP:10213"/>
        <dbReference type="Rhea" id="RHEA-COMP:10214"/>
        <dbReference type="ChEBI" id="CHEBI:15378"/>
        <dbReference type="ChEBI" id="CHEBI:57856"/>
        <dbReference type="ChEBI" id="CHEBI:59789"/>
        <dbReference type="ChEBI" id="CHEBI:74269"/>
        <dbReference type="ChEBI" id="CHEBI:74481"/>
        <dbReference type="EC" id="2.1.1.172"/>
    </reaction>
</comment>
<comment type="subunit">
    <text evidence="1">Monomer.</text>
</comment>
<comment type="subcellular location">
    <subcellularLocation>
        <location evidence="1">Cytoplasm</location>
    </subcellularLocation>
</comment>
<comment type="similarity">
    <text evidence="1">Belongs to the methyltransferase superfamily. RsmC family.</text>
</comment>
<reference key="1">
    <citation type="journal article" date="2008" name="DNA Res.">
        <title>Complete genome sequence and comparative analysis of the wild-type commensal Escherichia coli strain SE11 isolated from a healthy adult.</title>
        <authorList>
            <person name="Oshima K."/>
            <person name="Toh H."/>
            <person name="Ogura Y."/>
            <person name="Sasamoto H."/>
            <person name="Morita H."/>
            <person name="Park S.-H."/>
            <person name="Ooka T."/>
            <person name="Iyoda S."/>
            <person name="Taylor T.D."/>
            <person name="Hayashi T."/>
            <person name="Itoh K."/>
            <person name="Hattori M."/>
        </authorList>
    </citation>
    <scope>NUCLEOTIDE SEQUENCE [LARGE SCALE GENOMIC DNA]</scope>
    <source>
        <strain>SE11</strain>
    </source>
</reference>
<protein>
    <recommendedName>
        <fullName evidence="1">Ribosomal RNA small subunit methyltransferase C</fullName>
        <ecNumber evidence="1">2.1.1.172</ecNumber>
    </recommendedName>
    <alternativeName>
        <fullName evidence="1">16S rRNA m2G1207 methyltransferase</fullName>
    </alternativeName>
    <alternativeName>
        <fullName evidence="1">rRNA (guanine-N(2)-)-methyltransferase RsmC</fullName>
    </alternativeName>
</protein>
<gene>
    <name evidence="1" type="primary">rsmC</name>
    <name type="ordered locus">ECSE_4645</name>
</gene>
<sequence length="343" mass="37657">MSAFTPASEVLLRHSDDFEQSRILFAGDLQDDLPARLDTAASRAHTQQFHHWQVLSRQMGDNARFSLVATADDVADCDTLIYYWPKNKPEAQFQLMNLLSLLPVGTDIFVVGENRSGVRSAEQMLADYAPLNKVDSARRCGLYFGRLEKQPVFDADKFWGEYSVDGLTVKTLPGVFSRDGLDVGSQLLLSTLTPHTKGKVLDVGCGAGVLSVAFARHSPKIRLTLCDVSAPAVEASRATLAANCVEGEVFASNVFSEVKGRFDMIISNPPFHDGMQTSLDAAQTLIRGAVRHLNSGGELRIVANAFLPYPDVLDETFGFHEVIAQTGRFKVYRAIMTRQAKKG</sequence>
<proteinExistence type="inferred from homology"/>
<accession>B6I2Q2</accession>